<feature type="chain" id="PRO_0000242240" description="Phosphomethylpyrimidine synthase">
    <location>
        <begin position="1"/>
        <end position="564"/>
    </location>
</feature>
<feature type="binding site" evidence="1">
    <location>
        <position position="203"/>
    </location>
    <ligand>
        <name>substrate</name>
    </ligand>
</feature>
<feature type="binding site" evidence="1">
    <location>
        <position position="232"/>
    </location>
    <ligand>
        <name>substrate</name>
    </ligand>
</feature>
<feature type="binding site" evidence="1">
    <location>
        <position position="261"/>
    </location>
    <ligand>
        <name>substrate</name>
    </ligand>
</feature>
<feature type="binding site" evidence="1">
    <location>
        <position position="297"/>
    </location>
    <ligand>
        <name>substrate</name>
    </ligand>
</feature>
<feature type="binding site" evidence="1">
    <location>
        <begin position="317"/>
        <end position="319"/>
    </location>
    <ligand>
        <name>substrate</name>
    </ligand>
</feature>
<feature type="binding site" evidence="1">
    <location>
        <begin position="358"/>
        <end position="361"/>
    </location>
    <ligand>
        <name>substrate</name>
    </ligand>
</feature>
<feature type="binding site" evidence="1">
    <location>
        <position position="397"/>
    </location>
    <ligand>
        <name>substrate</name>
    </ligand>
</feature>
<feature type="binding site" evidence="1">
    <location>
        <position position="401"/>
    </location>
    <ligand>
        <name>Zn(2+)</name>
        <dbReference type="ChEBI" id="CHEBI:29105"/>
    </ligand>
</feature>
<feature type="binding site" evidence="1">
    <location>
        <position position="424"/>
    </location>
    <ligand>
        <name>substrate</name>
    </ligand>
</feature>
<feature type="binding site" evidence="1">
    <location>
        <position position="465"/>
    </location>
    <ligand>
        <name>Zn(2+)</name>
        <dbReference type="ChEBI" id="CHEBI:29105"/>
    </ligand>
</feature>
<feature type="binding site" evidence="1">
    <location>
        <position position="541"/>
    </location>
    <ligand>
        <name>[4Fe-4S] cluster</name>
        <dbReference type="ChEBI" id="CHEBI:49883"/>
        <note>4Fe-4S-S-AdoMet</note>
    </ligand>
</feature>
<feature type="binding site" evidence="1">
    <location>
        <position position="544"/>
    </location>
    <ligand>
        <name>[4Fe-4S] cluster</name>
        <dbReference type="ChEBI" id="CHEBI:49883"/>
        <note>4Fe-4S-S-AdoMet</note>
    </ligand>
</feature>
<feature type="binding site" evidence="1">
    <location>
        <position position="549"/>
    </location>
    <ligand>
        <name>[4Fe-4S] cluster</name>
        <dbReference type="ChEBI" id="CHEBI:49883"/>
        <note>4Fe-4S-S-AdoMet</note>
    </ligand>
</feature>
<protein>
    <recommendedName>
        <fullName evidence="1">Phosphomethylpyrimidine synthase</fullName>
        <ecNumber evidence="1">4.1.99.17</ecNumber>
    </recommendedName>
    <alternativeName>
        <fullName evidence="1">Hydroxymethylpyrimidine phosphate synthase</fullName>
        <shortName evidence="1">HMP-P synthase</shortName>
        <shortName evidence="1">HMP-phosphate synthase</shortName>
        <shortName evidence="1">HMPP synthase</shortName>
    </alternativeName>
    <alternativeName>
        <fullName evidence="1">Thiamine biosynthesis protein ThiC</fullName>
    </alternativeName>
</protein>
<comment type="function">
    <text evidence="1">Catalyzes the synthesis of the hydroxymethylpyrimidine phosphate (HMP-P) moiety of thiamine from aminoimidazole ribotide (AIR) in a radical S-adenosyl-L-methionine (SAM)-dependent reaction.</text>
</comment>
<comment type="catalytic activity">
    <reaction evidence="1">
        <text>5-amino-1-(5-phospho-beta-D-ribosyl)imidazole + S-adenosyl-L-methionine = 4-amino-2-methyl-5-(phosphooxymethyl)pyrimidine + CO + 5'-deoxyadenosine + formate + L-methionine + 3 H(+)</text>
        <dbReference type="Rhea" id="RHEA:24840"/>
        <dbReference type="ChEBI" id="CHEBI:15378"/>
        <dbReference type="ChEBI" id="CHEBI:15740"/>
        <dbReference type="ChEBI" id="CHEBI:17245"/>
        <dbReference type="ChEBI" id="CHEBI:17319"/>
        <dbReference type="ChEBI" id="CHEBI:57844"/>
        <dbReference type="ChEBI" id="CHEBI:58354"/>
        <dbReference type="ChEBI" id="CHEBI:59789"/>
        <dbReference type="ChEBI" id="CHEBI:137981"/>
        <dbReference type="EC" id="4.1.99.17"/>
    </reaction>
</comment>
<comment type="cofactor">
    <cofactor evidence="1">
        <name>[4Fe-4S] cluster</name>
        <dbReference type="ChEBI" id="CHEBI:49883"/>
    </cofactor>
    <text evidence="1">Binds 1 [4Fe-4S] cluster per subunit. The cluster is coordinated with 3 cysteines and an exchangeable S-adenosyl-L-methionine.</text>
</comment>
<comment type="pathway">
    <text evidence="1">Cofactor biosynthesis; thiamine diphosphate biosynthesis.</text>
</comment>
<comment type="similarity">
    <text evidence="1">Belongs to the ThiC family.</text>
</comment>
<dbReference type="EC" id="4.1.99.17" evidence="1"/>
<dbReference type="EMBL" id="AP006841">
    <property type="protein sequence ID" value="BAD49280.1"/>
    <property type="molecule type" value="Genomic_DNA"/>
</dbReference>
<dbReference type="RefSeq" id="WP_005815685.1">
    <property type="nucleotide sequence ID" value="NZ_UYXF01000003.1"/>
</dbReference>
<dbReference type="RefSeq" id="YP_099814.1">
    <property type="nucleotide sequence ID" value="NC_006347.1"/>
</dbReference>
<dbReference type="SMR" id="Q64T99"/>
<dbReference type="STRING" id="295405.BF2531"/>
<dbReference type="GeneID" id="60369883"/>
<dbReference type="KEGG" id="bfr:BF2531"/>
<dbReference type="PATRIC" id="fig|295405.11.peg.2438"/>
<dbReference type="HOGENOM" id="CLU_013181_2_1_10"/>
<dbReference type="OrthoDB" id="9805897at2"/>
<dbReference type="UniPathway" id="UPA00060"/>
<dbReference type="Proteomes" id="UP000002197">
    <property type="component" value="Chromosome"/>
</dbReference>
<dbReference type="GO" id="GO:0005829">
    <property type="term" value="C:cytosol"/>
    <property type="evidence" value="ECO:0007669"/>
    <property type="project" value="TreeGrafter"/>
</dbReference>
<dbReference type="GO" id="GO:0051539">
    <property type="term" value="F:4 iron, 4 sulfur cluster binding"/>
    <property type="evidence" value="ECO:0007669"/>
    <property type="project" value="UniProtKB-KW"/>
</dbReference>
<dbReference type="GO" id="GO:0016830">
    <property type="term" value="F:carbon-carbon lyase activity"/>
    <property type="evidence" value="ECO:0007669"/>
    <property type="project" value="InterPro"/>
</dbReference>
<dbReference type="GO" id="GO:0008270">
    <property type="term" value="F:zinc ion binding"/>
    <property type="evidence" value="ECO:0007669"/>
    <property type="project" value="UniProtKB-UniRule"/>
</dbReference>
<dbReference type="GO" id="GO:0009228">
    <property type="term" value="P:thiamine biosynthetic process"/>
    <property type="evidence" value="ECO:0007669"/>
    <property type="project" value="UniProtKB-KW"/>
</dbReference>
<dbReference type="GO" id="GO:0009229">
    <property type="term" value="P:thiamine diphosphate biosynthetic process"/>
    <property type="evidence" value="ECO:0007669"/>
    <property type="project" value="UniProtKB-UniRule"/>
</dbReference>
<dbReference type="FunFam" id="3.20.20.540:FF:000001">
    <property type="entry name" value="Phosphomethylpyrimidine synthase"/>
    <property type="match status" value="1"/>
</dbReference>
<dbReference type="Gene3D" id="6.10.250.620">
    <property type="match status" value="1"/>
</dbReference>
<dbReference type="Gene3D" id="3.20.20.540">
    <property type="entry name" value="Radical SAM ThiC family, central domain"/>
    <property type="match status" value="1"/>
</dbReference>
<dbReference type="HAMAP" id="MF_00089">
    <property type="entry name" value="ThiC"/>
    <property type="match status" value="1"/>
</dbReference>
<dbReference type="InterPro" id="IPR037509">
    <property type="entry name" value="ThiC"/>
</dbReference>
<dbReference type="InterPro" id="IPR025747">
    <property type="entry name" value="ThiC-associated_dom"/>
</dbReference>
<dbReference type="InterPro" id="IPR038521">
    <property type="entry name" value="ThiC/Bza_core_dom"/>
</dbReference>
<dbReference type="InterPro" id="IPR002817">
    <property type="entry name" value="ThiC/BzaA/B"/>
</dbReference>
<dbReference type="NCBIfam" id="NF006763">
    <property type="entry name" value="PRK09284.1"/>
    <property type="match status" value="1"/>
</dbReference>
<dbReference type="NCBIfam" id="NF009895">
    <property type="entry name" value="PRK13352.1"/>
    <property type="match status" value="1"/>
</dbReference>
<dbReference type="NCBIfam" id="TIGR00190">
    <property type="entry name" value="thiC"/>
    <property type="match status" value="1"/>
</dbReference>
<dbReference type="PANTHER" id="PTHR30557:SF1">
    <property type="entry name" value="PHOSPHOMETHYLPYRIMIDINE SYNTHASE, CHLOROPLASTIC"/>
    <property type="match status" value="1"/>
</dbReference>
<dbReference type="PANTHER" id="PTHR30557">
    <property type="entry name" value="THIAMINE BIOSYNTHESIS PROTEIN THIC"/>
    <property type="match status" value="1"/>
</dbReference>
<dbReference type="Pfam" id="PF13667">
    <property type="entry name" value="ThiC-associated"/>
    <property type="match status" value="1"/>
</dbReference>
<dbReference type="Pfam" id="PF01964">
    <property type="entry name" value="ThiC_Rad_SAM"/>
    <property type="match status" value="1"/>
</dbReference>
<dbReference type="SFLD" id="SFLDF00407">
    <property type="entry name" value="phosphomethylpyrimidine_syntha"/>
    <property type="match status" value="1"/>
</dbReference>
<dbReference type="SFLD" id="SFLDG01114">
    <property type="entry name" value="phosphomethylpyrimidine_syntha"/>
    <property type="match status" value="1"/>
</dbReference>
<dbReference type="SFLD" id="SFLDS00113">
    <property type="entry name" value="Radical_SAM_Phosphomethylpyrim"/>
    <property type="match status" value="1"/>
</dbReference>
<evidence type="ECO:0000255" key="1">
    <source>
        <dbReference type="HAMAP-Rule" id="MF_00089"/>
    </source>
</evidence>
<accession>Q64T99</accession>
<gene>
    <name evidence="1" type="primary">thiC</name>
    <name type="ordered locus">BF2531</name>
</gene>
<reference key="1">
    <citation type="journal article" date="2004" name="Proc. Natl. Acad. Sci. U.S.A.">
        <title>Genomic analysis of Bacteroides fragilis reveals extensive DNA inversions regulating cell surface adaptation.</title>
        <authorList>
            <person name="Kuwahara T."/>
            <person name="Yamashita A."/>
            <person name="Hirakawa H."/>
            <person name="Nakayama H."/>
            <person name="Toh H."/>
            <person name="Okada N."/>
            <person name="Kuhara S."/>
            <person name="Hattori M."/>
            <person name="Hayashi T."/>
            <person name="Ohnishi Y."/>
        </authorList>
    </citation>
    <scope>NUCLEOTIDE SEQUENCE [LARGE SCALE GENOMIC DNA]</scope>
    <source>
        <strain>YCH46</strain>
    </source>
</reference>
<keyword id="KW-0004">4Fe-4S</keyword>
<keyword id="KW-0408">Iron</keyword>
<keyword id="KW-0411">Iron-sulfur</keyword>
<keyword id="KW-0456">Lyase</keyword>
<keyword id="KW-0479">Metal-binding</keyword>
<keyword id="KW-0949">S-adenosyl-L-methionine</keyword>
<keyword id="KW-0784">Thiamine biosynthesis</keyword>
<keyword id="KW-0862">Zinc</keyword>
<sequence>MEQRIKFPRSEKVYLSGKLFPEIRVGMRKVEQVPSTTFEGEKKVITPNPHVYIYDTSGPFSDPDIEIDLKKGLPRLREEWILNRGDVEQLPEISSEYGRMRRDDGSLDHLRFEHIALPYRAKAGRHITQMAYAKQGIVTPEMEYVAIRENMNCEELGIETHITPEFVRQEIAEGRAVLPANINHPEAEPMIIGRNFLVKINTNIGNSATTSSIDEEVEKAMWSCKWGGDTLMDLSTGENIHETREWIIRNCPVPVGTVPIYQALEKVNGKVEDLTWELYRDTLIEQCEQGVDYFTIHAGIRRHNVHLAEKRLCGIVSRGGSIMSKWCLVHDRESFLYEHFDDICDILAQYDVAVSLGDGLRPGSTHDANDEAQFAELDTMGELVVRAWEKNVQAFIEGPGHVPMHKIRENMERQIEKCHNAPFYTLGPLVTDIAPGYDHITSAIGAAQIGWLGTAMLCYVTPKEHLALPDKEDVRVGVITYKIAAHAADLAKGHPGAQVRDNALSKARYEFRWKDQFDLSLDPERAFSYFHAGRHTDGEYCTMCGPNFCAMRLSRDLKKTQKQK</sequence>
<organism>
    <name type="scientific">Bacteroides fragilis (strain YCH46)</name>
    <dbReference type="NCBI Taxonomy" id="295405"/>
    <lineage>
        <taxon>Bacteria</taxon>
        <taxon>Pseudomonadati</taxon>
        <taxon>Bacteroidota</taxon>
        <taxon>Bacteroidia</taxon>
        <taxon>Bacteroidales</taxon>
        <taxon>Bacteroidaceae</taxon>
        <taxon>Bacteroides</taxon>
    </lineage>
</organism>
<name>THIC_BACFR</name>
<proteinExistence type="inferred from homology"/>